<name>MOAA_NAUPA</name>
<accession>B9L851</accession>
<proteinExistence type="inferred from homology"/>
<feature type="chain" id="PRO_1000164917" description="GTP 3',8-cyclase">
    <location>
        <begin position="1"/>
        <end position="318"/>
    </location>
</feature>
<feature type="domain" description="Radical SAM core" evidence="2">
    <location>
        <begin position="5"/>
        <end position="217"/>
    </location>
</feature>
<feature type="binding site" evidence="1">
    <location>
        <position position="14"/>
    </location>
    <ligand>
        <name>GTP</name>
        <dbReference type="ChEBI" id="CHEBI:37565"/>
    </ligand>
</feature>
<feature type="binding site" evidence="1">
    <location>
        <position position="21"/>
    </location>
    <ligand>
        <name>[4Fe-4S] cluster</name>
        <dbReference type="ChEBI" id="CHEBI:49883"/>
        <label>1</label>
        <note>4Fe-4S-S-AdoMet</note>
    </ligand>
</feature>
<feature type="binding site" evidence="1">
    <location>
        <position position="25"/>
    </location>
    <ligand>
        <name>[4Fe-4S] cluster</name>
        <dbReference type="ChEBI" id="CHEBI:49883"/>
        <label>1</label>
        <note>4Fe-4S-S-AdoMet</note>
    </ligand>
</feature>
<feature type="binding site" evidence="1">
    <location>
        <position position="27"/>
    </location>
    <ligand>
        <name>S-adenosyl-L-methionine</name>
        <dbReference type="ChEBI" id="CHEBI:59789"/>
    </ligand>
</feature>
<feature type="binding site" evidence="1">
    <location>
        <position position="28"/>
    </location>
    <ligand>
        <name>[4Fe-4S] cluster</name>
        <dbReference type="ChEBI" id="CHEBI:49883"/>
        <label>1</label>
        <note>4Fe-4S-S-AdoMet</note>
    </ligand>
</feature>
<feature type="binding site" evidence="1">
    <location>
        <position position="64"/>
    </location>
    <ligand>
        <name>GTP</name>
        <dbReference type="ChEBI" id="CHEBI:37565"/>
    </ligand>
</feature>
<feature type="binding site" evidence="1">
    <location>
        <position position="68"/>
    </location>
    <ligand>
        <name>S-adenosyl-L-methionine</name>
        <dbReference type="ChEBI" id="CHEBI:59789"/>
    </ligand>
</feature>
<feature type="binding site" evidence="1">
    <location>
        <position position="95"/>
    </location>
    <ligand>
        <name>GTP</name>
        <dbReference type="ChEBI" id="CHEBI:37565"/>
    </ligand>
</feature>
<feature type="binding site" evidence="1">
    <location>
        <position position="119"/>
    </location>
    <ligand>
        <name>S-adenosyl-L-methionine</name>
        <dbReference type="ChEBI" id="CHEBI:59789"/>
    </ligand>
</feature>
<feature type="binding site" evidence="1">
    <location>
        <position position="155"/>
    </location>
    <ligand>
        <name>GTP</name>
        <dbReference type="ChEBI" id="CHEBI:37565"/>
    </ligand>
</feature>
<feature type="binding site" evidence="1">
    <location>
        <position position="189"/>
    </location>
    <ligand>
        <name>S-adenosyl-L-methionine</name>
        <dbReference type="ChEBI" id="CHEBI:59789"/>
    </ligand>
</feature>
<feature type="binding site" evidence="1">
    <location>
        <position position="248"/>
    </location>
    <ligand>
        <name>[4Fe-4S] cluster</name>
        <dbReference type="ChEBI" id="CHEBI:49883"/>
        <label>2</label>
        <note>4Fe-4S-substrate</note>
    </ligand>
</feature>
<feature type="binding site" evidence="1">
    <location>
        <position position="251"/>
    </location>
    <ligand>
        <name>[4Fe-4S] cluster</name>
        <dbReference type="ChEBI" id="CHEBI:49883"/>
        <label>2</label>
        <note>4Fe-4S-substrate</note>
    </ligand>
</feature>
<feature type="binding site" evidence="1">
    <location>
        <begin position="253"/>
        <end position="255"/>
    </location>
    <ligand>
        <name>GTP</name>
        <dbReference type="ChEBI" id="CHEBI:37565"/>
    </ligand>
</feature>
<feature type="binding site" evidence="1">
    <location>
        <position position="265"/>
    </location>
    <ligand>
        <name>[4Fe-4S] cluster</name>
        <dbReference type="ChEBI" id="CHEBI:49883"/>
        <label>2</label>
        <note>4Fe-4S-substrate</note>
    </ligand>
</feature>
<comment type="function">
    <text evidence="1">Catalyzes the cyclization of GTP to (8S)-3',8-cyclo-7,8-dihydroguanosine 5'-triphosphate.</text>
</comment>
<comment type="catalytic activity">
    <reaction evidence="1">
        <text>GTP + AH2 + S-adenosyl-L-methionine = (8S)-3',8-cyclo-7,8-dihydroguanosine 5'-triphosphate + 5'-deoxyadenosine + L-methionine + A + H(+)</text>
        <dbReference type="Rhea" id="RHEA:49576"/>
        <dbReference type="ChEBI" id="CHEBI:13193"/>
        <dbReference type="ChEBI" id="CHEBI:15378"/>
        <dbReference type="ChEBI" id="CHEBI:17319"/>
        <dbReference type="ChEBI" id="CHEBI:17499"/>
        <dbReference type="ChEBI" id="CHEBI:37565"/>
        <dbReference type="ChEBI" id="CHEBI:57844"/>
        <dbReference type="ChEBI" id="CHEBI:59789"/>
        <dbReference type="ChEBI" id="CHEBI:131766"/>
        <dbReference type="EC" id="4.1.99.22"/>
    </reaction>
</comment>
<comment type="cofactor">
    <cofactor evidence="1">
        <name>[4Fe-4S] cluster</name>
        <dbReference type="ChEBI" id="CHEBI:49883"/>
    </cofactor>
    <text evidence="1">Binds 2 [4Fe-4S] clusters. Binds 1 [4Fe-4S] cluster coordinated with 3 cysteines and an exchangeable S-adenosyl-L-methionine and 1 [4Fe-4S] cluster coordinated with 3 cysteines and the GTP-derived substrate.</text>
</comment>
<comment type="pathway">
    <text evidence="1">Cofactor biosynthesis; molybdopterin biosynthesis.</text>
</comment>
<comment type="subunit">
    <text evidence="1">Monomer and homodimer.</text>
</comment>
<comment type="similarity">
    <text evidence="1">Belongs to the radical SAM superfamily. MoaA family.</text>
</comment>
<organism>
    <name type="scientific">Nautilia profundicola (strain ATCC BAA-1463 / DSM 18972 / AmH)</name>
    <dbReference type="NCBI Taxonomy" id="598659"/>
    <lineage>
        <taxon>Bacteria</taxon>
        <taxon>Pseudomonadati</taxon>
        <taxon>Campylobacterota</taxon>
        <taxon>Epsilonproteobacteria</taxon>
        <taxon>Nautiliales</taxon>
        <taxon>Nautiliaceae</taxon>
        <taxon>Nautilia</taxon>
    </lineage>
</organism>
<sequence>MLIDKFERKIDYIRVSVTSRCNFRCLYCMPNTPFEWEPHENILRYEEMFEFLRLAIDEGINKIRLTGGEPLLRKDLDVFVKMLHDYRPDLDLALTTNGYYLKEYAKKLKDAGLKRVNMSLDSLKPEVAAKIAQKDVLNRVIQGLDEALKVGLKVKLNTVVMQGINDTEILDLLEFAKNKGVTIRFIEFMENERAYPGVKRVDSKVILDKIAKKYKFKELPKDNSASRYFETEDGYVFGIIEPHNEDFCKSCNRIRLTAEGYLIPCLFFTESYNIKEALREGNIQKASEILREVVANKPEKNDWQDEEVSTRAFWETGG</sequence>
<evidence type="ECO:0000255" key="1">
    <source>
        <dbReference type="HAMAP-Rule" id="MF_01225"/>
    </source>
</evidence>
<evidence type="ECO:0000255" key="2">
    <source>
        <dbReference type="PROSITE-ProRule" id="PRU01266"/>
    </source>
</evidence>
<reference key="1">
    <citation type="journal article" date="2009" name="PLoS Genet.">
        <title>Adaptations to submarine hydrothermal environments exemplified by the genome of Nautilia profundicola.</title>
        <authorList>
            <person name="Campbell B.J."/>
            <person name="Smith J.L."/>
            <person name="Hanson T.E."/>
            <person name="Klotz M.G."/>
            <person name="Stein L.Y."/>
            <person name="Lee C.K."/>
            <person name="Wu D."/>
            <person name="Robinson J.M."/>
            <person name="Khouri H.M."/>
            <person name="Eisen J.A."/>
            <person name="Cary S.C."/>
        </authorList>
    </citation>
    <scope>NUCLEOTIDE SEQUENCE [LARGE SCALE GENOMIC DNA]</scope>
    <source>
        <strain>ATCC BAA-1463 / DSM 18972 / AmH</strain>
    </source>
</reference>
<protein>
    <recommendedName>
        <fullName evidence="1">GTP 3',8-cyclase</fullName>
        <ecNumber evidence="1">4.1.99.22</ecNumber>
    </recommendedName>
    <alternativeName>
        <fullName evidence="1">Molybdenum cofactor biosynthesis protein A</fullName>
    </alternativeName>
</protein>
<keyword id="KW-0004">4Fe-4S</keyword>
<keyword id="KW-0342">GTP-binding</keyword>
<keyword id="KW-0408">Iron</keyword>
<keyword id="KW-0411">Iron-sulfur</keyword>
<keyword id="KW-0456">Lyase</keyword>
<keyword id="KW-0479">Metal-binding</keyword>
<keyword id="KW-0501">Molybdenum cofactor biosynthesis</keyword>
<keyword id="KW-0547">Nucleotide-binding</keyword>
<keyword id="KW-0949">S-adenosyl-L-methionine</keyword>
<gene>
    <name evidence="1" type="primary">moaA</name>
    <name type="ordered locus">NAMH_0386</name>
</gene>
<dbReference type="EC" id="4.1.99.22" evidence="1"/>
<dbReference type="EMBL" id="CP001279">
    <property type="protein sequence ID" value="ACM92895.1"/>
    <property type="molecule type" value="Genomic_DNA"/>
</dbReference>
<dbReference type="RefSeq" id="WP_015901947.1">
    <property type="nucleotide sequence ID" value="NC_012115.1"/>
</dbReference>
<dbReference type="SMR" id="B9L851"/>
<dbReference type="STRING" id="598659.NAMH_0386"/>
<dbReference type="KEGG" id="nam:NAMH_0386"/>
<dbReference type="eggNOG" id="COG2896">
    <property type="taxonomic scope" value="Bacteria"/>
</dbReference>
<dbReference type="HOGENOM" id="CLU_009273_0_1_7"/>
<dbReference type="OrthoDB" id="9763993at2"/>
<dbReference type="UniPathway" id="UPA00344"/>
<dbReference type="Proteomes" id="UP000000448">
    <property type="component" value="Chromosome"/>
</dbReference>
<dbReference type="GO" id="GO:0051539">
    <property type="term" value="F:4 iron, 4 sulfur cluster binding"/>
    <property type="evidence" value="ECO:0007669"/>
    <property type="project" value="UniProtKB-UniRule"/>
</dbReference>
<dbReference type="GO" id="GO:0061799">
    <property type="term" value="F:cyclic pyranopterin monophosphate synthase activity"/>
    <property type="evidence" value="ECO:0007669"/>
    <property type="project" value="TreeGrafter"/>
</dbReference>
<dbReference type="GO" id="GO:0061798">
    <property type="term" value="F:GTP 3',8'-cyclase activity"/>
    <property type="evidence" value="ECO:0007669"/>
    <property type="project" value="UniProtKB-UniRule"/>
</dbReference>
<dbReference type="GO" id="GO:0005525">
    <property type="term" value="F:GTP binding"/>
    <property type="evidence" value="ECO:0007669"/>
    <property type="project" value="UniProtKB-UniRule"/>
</dbReference>
<dbReference type="GO" id="GO:0046872">
    <property type="term" value="F:metal ion binding"/>
    <property type="evidence" value="ECO:0007669"/>
    <property type="project" value="UniProtKB-KW"/>
</dbReference>
<dbReference type="GO" id="GO:1904047">
    <property type="term" value="F:S-adenosyl-L-methionine binding"/>
    <property type="evidence" value="ECO:0007669"/>
    <property type="project" value="UniProtKB-UniRule"/>
</dbReference>
<dbReference type="GO" id="GO:0006777">
    <property type="term" value="P:Mo-molybdopterin cofactor biosynthetic process"/>
    <property type="evidence" value="ECO:0007669"/>
    <property type="project" value="UniProtKB-UniRule"/>
</dbReference>
<dbReference type="CDD" id="cd01335">
    <property type="entry name" value="Radical_SAM"/>
    <property type="match status" value="1"/>
</dbReference>
<dbReference type="CDD" id="cd21117">
    <property type="entry name" value="Twitch_MoaA"/>
    <property type="match status" value="1"/>
</dbReference>
<dbReference type="Gene3D" id="3.20.20.70">
    <property type="entry name" value="Aldolase class I"/>
    <property type="match status" value="1"/>
</dbReference>
<dbReference type="HAMAP" id="MF_01225_B">
    <property type="entry name" value="MoaA_B"/>
    <property type="match status" value="1"/>
</dbReference>
<dbReference type="InterPro" id="IPR013785">
    <property type="entry name" value="Aldolase_TIM"/>
</dbReference>
<dbReference type="InterPro" id="IPR006638">
    <property type="entry name" value="Elp3/MiaA/NifB-like_rSAM"/>
</dbReference>
<dbReference type="InterPro" id="IPR013483">
    <property type="entry name" value="MoaA"/>
</dbReference>
<dbReference type="InterPro" id="IPR000385">
    <property type="entry name" value="MoaA_NifB_PqqE_Fe-S-bd_CS"/>
</dbReference>
<dbReference type="InterPro" id="IPR010505">
    <property type="entry name" value="MoaA_twitch"/>
</dbReference>
<dbReference type="InterPro" id="IPR050105">
    <property type="entry name" value="MoCo_biosynth_MoaA/MoaC"/>
</dbReference>
<dbReference type="InterPro" id="IPR007197">
    <property type="entry name" value="rSAM"/>
</dbReference>
<dbReference type="NCBIfam" id="TIGR02666">
    <property type="entry name" value="moaA"/>
    <property type="match status" value="1"/>
</dbReference>
<dbReference type="NCBIfam" id="NF001199">
    <property type="entry name" value="PRK00164.2-1"/>
    <property type="match status" value="1"/>
</dbReference>
<dbReference type="PANTHER" id="PTHR22960:SF0">
    <property type="entry name" value="MOLYBDENUM COFACTOR BIOSYNTHESIS PROTEIN 1"/>
    <property type="match status" value="1"/>
</dbReference>
<dbReference type="PANTHER" id="PTHR22960">
    <property type="entry name" value="MOLYBDOPTERIN COFACTOR SYNTHESIS PROTEIN A"/>
    <property type="match status" value="1"/>
</dbReference>
<dbReference type="Pfam" id="PF13353">
    <property type="entry name" value="Fer4_12"/>
    <property type="match status" value="1"/>
</dbReference>
<dbReference type="Pfam" id="PF06463">
    <property type="entry name" value="Mob_synth_C"/>
    <property type="match status" value="1"/>
</dbReference>
<dbReference type="Pfam" id="PF04055">
    <property type="entry name" value="Radical_SAM"/>
    <property type="match status" value="1"/>
</dbReference>
<dbReference type="SFLD" id="SFLDG01383">
    <property type="entry name" value="cyclic_pyranopterin_phosphate"/>
    <property type="match status" value="1"/>
</dbReference>
<dbReference type="SFLD" id="SFLDG01067">
    <property type="entry name" value="SPASM/twitch_domain_containing"/>
    <property type="match status" value="1"/>
</dbReference>
<dbReference type="SMART" id="SM00729">
    <property type="entry name" value="Elp3"/>
    <property type="match status" value="1"/>
</dbReference>
<dbReference type="SUPFAM" id="SSF102114">
    <property type="entry name" value="Radical SAM enzymes"/>
    <property type="match status" value="1"/>
</dbReference>
<dbReference type="PROSITE" id="PS01305">
    <property type="entry name" value="MOAA_NIFB_PQQE"/>
    <property type="match status" value="1"/>
</dbReference>
<dbReference type="PROSITE" id="PS51918">
    <property type="entry name" value="RADICAL_SAM"/>
    <property type="match status" value="1"/>
</dbReference>